<protein>
    <recommendedName>
        <fullName>Small, acid-soluble spore protein B</fullName>
        <shortName>SASP</shortName>
    </recommendedName>
</protein>
<comment type="function">
    <text>SASP are bound to spore DNA. They are double-stranded DNA-binding proteins that cause DNA to change to an a-like conformation. They protect the DNA backbone from chemical and enzymatic cleavage and are thus involved in dormant spore's high resistance to UV light.</text>
</comment>
<comment type="miscellaneous">
    <text>SASP are degraded in the first minutes of spore germination and provide amino acids for both new protein synthesis and metabolism.</text>
</comment>
<comment type="similarity">
    <text evidence="1">Belongs to the alpha/beta-type SASP family.</text>
</comment>
<keyword id="KW-0238">DNA-binding</keyword>
<keyword id="KW-1185">Reference proteome</keyword>
<keyword id="KW-0749">Sporulation</keyword>
<feature type="chain" id="PRO_0000196300" description="Small, acid-soluble spore protein B">
    <location>
        <begin position="1"/>
        <end position="67"/>
    </location>
</feature>
<feature type="site" description="Cleavage; by spore protease">
    <location>
        <begin position="25"/>
        <end position="26"/>
    </location>
</feature>
<gene>
    <name type="primary">sspB</name>
    <name type="ordered locus">BSU09750</name>
</gene>
<proteinExistence type="inferred from homology"/>
<dbReference type="EMBL" id="M12621">
    <property type="protein sequence ID" value="AAA22834.1"/>
    <property type="molecule type" value="Genomic_DNA"/>
</dbReference>
<dbReference type="EMBL" id="Y14080">
    <property type="protein sequence ID" value="CAA74447.1"/>
    <property type="molecule type" value="Genomic_DNA"/>
</dbReference>
<dbReference type="EMBL" id="AL009126">
    <property type="protein sequence ID" value="CAB12814.1"/>
    <property type="molecule type" value="Genomic_DNA"/>
</dbReference>
<dbReference type="PIR" id="H69718">
    <property type="entry name" value="H69718"/>
</dbReference>
<dbReference type="RefSeq" id="NP_388856.1">
    <property type="nucleotide sequence ID" value="NC_000964.3"/>
</dbReference>
<dbReference type="RefSeq" id="WP_003233287.1">
    <property type="nucleotide sequence ID" value="NZ_OZ025638.1"/>
</dbReference>
<dbReference type="SMR" id="P04832"/>
<dbReference type="FunCoup" id="P04832">
    <property type="interactions" value="92"/>
</dbReference>
<dbReference type="STRING" id="224308.BSU09750"/>
<dbReference type="PaxDb" id="224308-BSU09750"/>
<dbReference type="EnsemblBacteria" id="CAB12814">
    <property type="protein sequence ID" value="CAB12814"/>
    <property type="gene ID" value="BSU_09750"/>
</dbReference>
<dbReference type="GeneID" id="76977462"/>
<dbReference type="GeneID" id="939281"/>
<dbReference type="KEGG" id="bsu:BSU09750"/>
<dbReference type="PATRIC" id="fig|224308.179.peg.1048"/>
<dbReference type="eggNOG" id="ENOG5032YCI">
    <property type="taxonomic scope" value="Bacteria"/>
</dbReference>
<dbReference type="InParanoid" id="P04832"/>
<dbReference type="OrthoDB" id="2627848at2"/>
<dbReference type="PhylomeDB" id="P04832"/>
<dbReference type="BioCyc" id="BSUB:BSU09750-MONOMER"/>
<dbReference type="PRO" id="PR:P04832"/>
<dbReference type="Proteomes" id="UP000001570">
    <property type="component" value="Chromosome"/>
</dbReference>
<dbReference type="GO" id="GO:0003690">
    <property type="term" value="F:double-stranded DNA binding"/>
    <property type="evidence" value="ECO:0007669"/>
    <property type="project" value="InterPro"/>
</dbReference>
<dbReference type="GO" id="GO:0006265">
    <property type="term" value="P:DNA topological change"/>
    <property type="evidence" value="ECO:0007669"/>
    <property type="project" value="InterPro"/>
</dbReference>
<dbReference type="GO" id="GO:0030435">
    <property type="term" value="P:sporulation resulting in formation of a cellular spore"/>
    <property type="evidence" value="ECO:0007669"/>
    <property type="project" value="UniProtKB-KW"/>
</dbReference>
<dbReference type="Gene3D" id="6.10.10.80">
    <property type="entry name" value="Small, acid-soluble spore protein, alpha/beta type-like"/>
    <property type="match status" value="1"/>
</dbReference>
<dbReference type="InterPro" id="IPR001448">
    <property type="entry name" value="SASP_alpha/beta-type"/>
</dbReference>
<dbReference type="InterPro" id="IPR018126">
    <property type="entry name" value="SASP_alpha/beta-type_CS"/>
</dbReference>
<dbReference type="InterPro" id="IPR050847">
    <property type="entry name" value="SASP_DNA-binding"/>
</dbReference>
<dbReference type="InterPro" id="IPR038300">
    <property type="entry name" value="SASP_sf_alpha/beta"/>
</dbReference>
<dbReference type="PANTHER" id="PTHR36107">
    <property type="entry name" value="SMALL, ACID-SOLUBLE SPORE PROTEIN A"/>
    <property type="match status" value="1"/>
</dbReference>
<dbReference type="PANTHER" id="PTHR36107:SF1">
    <property type="entry name" value="SMALL, ACID-SOLUBLE SPORE PROTEIN A"/>
    <property type="match status" value="1"/>
</dbReference>
<dbReference type="Pfam" id="PF00269">
    <property type="entry name" value="SASP"/>
    <property type="match status" value="1"/>
</dbReference>
<dbReference type="PROSITE" id="PS00304">
    <property type="entry name" value="SASP_1"/>
    <property type="match status" value="1"/>
</dbReference>
<dbReference type="PROSITE" id="PS00684">
    <property type="entry name" value="SASP_2"/>
    <property type="match status" value="1"/>
</dbReference>
<sequence length="67" mass="6980">MANQNSSNDLLVPGAAQAIDQMKLEIASEFGVNLGADTTSRANGSVGGEITKRLVSFAQQQMGGRVQ</sequence>
<accession>P04832</accession>
<organism>
    <name type="scientific">Bacillus subtilis (strain 168)</name>
    <dbReference type="NCBI Taxonomy" id="224308"/>
    <lineage>
        <taxon>Bacteria</taxon>
        <taxon>Bacillati</taxon>
        <taxon>Bacillota</taxon>
        <taxon>Bacilli</taxon>
        <taxon>Bacillales</taxon>
        <taxon>Bacillaceae</taxon>
        <taxon>Bacillus</taxon>
    </lineage>
</organism>
<reference key="1">
    <citation type="journal article" date="1986" name="J. Bacteriol.">
        <title>Cloning and nucleotide sequencing of genes for three small, acid-soluble proteins from Bacillus subtilis spores.</title>
        <authorList>
            <person name="Connors M.J."/>
            <person name="Mason J.M."/>
            <person name="Setlow P."/>
        </authorList>
    </citation>
    <scope>NUCLEOTIDE SEQUENCE [GENOMIC DNA]</scope>
</reference>
<reference key="2">
    <citation type="journal article" date="1998" name="Microbiology">
        <title>The 172 kb prkA-addAB region from 83 degrees to 97 degrees of the Bacillus subtilis chromosome contains several dysfunctional genes, the glyB marker, many genes encoding transporter proteins, and the ubiquitous hit gene.</title>
        <authorList>
            <person name="Noback M.A."/>
            <person name="Holsappel S."/>
            <person name="Kiewiet R."/>
            <person name="Terpstra P."/>
            <person name="Wambutt R."/>
            <person name="Wedler H."/>
            <person name="Venema G."/>
            <person name="Bron S."/>
        </authorList>
    </citation>
    <scope>NUCLEOTIDE SEQUENCE [GENOMIC DNA]</scope>
    <source>
        <strain>168</strain>
    </source>
</reference>
<reference key="3">
    <citation type="journal article" date="1997" name="Nature">
        <title>The complete genome sequence of the Gram-positive bacterium Bacillus subtilis.</title>
        <authorList>
            <person name="Kunst F."/>
            <person name="Ogasawara N."/>
            <person name="Moszer I."/>
            <person name="Albertini A.M."/>
            <person name="Alloni G."/>
            <person name="Azevedo V."/>
            <person name="Bertero M.G."/>
            <person name="Bessieres P."/>
            <person name="Bolotin A."/>
            <person name="Borchert S."/>
            <person name="Borriss R."/>
            <person name="Boursier L."/>
            <person name="Brans A."/>
            <person name="Braun M."/>
            <person name="Brignell S.C."/>
            <person name="Bron S."/>
            <person name="Brouillet S."/>
            <person name="Bruschi C.V."/>
            <person name="Caldwell B."/>
            <person name="Capuano V."/>
            <person name="Carter N.M."/>
            <person name="Choi S.-K."/>
            <person name="Codani J.-J."/>
            <person name="Connerton I.F."/>
            <person name="Cummings N.J."/>
            <person name="Daniel R.A."/>
            <person name="Denizot F."/>
            <person name="Devine K.M."/>
            <person name="Duesterhoeft A."/>
            <person name="Ehrlich S.D."/>
            <person name="Emmerson P.T."/>
            <person name="Entian K.-D."/>
            <person name="Errington J."/>
            <person name="Fabret C."/>
            <person name="Ferrari E."/>
            <person name="Foulger D."/>
            <person name="Fritz C."/>
            <person name="Fujita M."/>
            <person name="Fujita Y."/>
            <person name="Fuma S."/>
            <person name="Galizzi A."/>
            <person name="Galleron N."/>
            <person name="Ghim S.-Y."/>
            <person name="Glaser P."/>
            <person name="Goffeau A."/>
            <person name="Golightly E.J."/>
            <person name="Grandi G."/>
            <person name="Guiseppi G."/>
            <person name="Guy B.J."/>
            <person name="Haga K."/>
            <person name="Haiech J."/>
            <person name="Harwood C.R."/>
            <person name="Henaut A."/>
            <person name="Hilbert H."/>
            <person name="Holsappel S."/>
            <person name="Hosono S."/>
            <person name="Hullo M.-F."/>
            <person name="Itaya M."/>
            <person name="Jones L.-M."/>
            <person name="Joris B."/>
            <person name="Karamata D."/>
            <person name="Kasahara Y."/>
            <person name="Klaerr-Blanchard M."/>
            <person name="Klein C."/>
            <person name="Kobayashi Y."/>
            <person name="Koetter P."/>
            <person name="Koningstein G."/>
            <person name="Krogh S."/>
            <person name="Kumano M."/>
            <person name="Kurita K."/>
            <person name="Lapidus A."/>
            <person name="Lardinois S."/>
            <person name="Lauber J."/>
            <person name="Lazarevic V."/>
            <person name="Lee S.-M."/>
            <person name="Levine A."/>
            <person name="Liu H."/>
            <person name="Masuda S."/>
            <person name="Mauel C."/>
            <person name="Medigue C."/>
            <person name="Medina N."/>
            <person name="Mellado R.P."/>
            <person name="Mizuno M."/>
            <person name="Moestl D."/>
            <person name="Nakai S."/>
            <person name="Noback M."/>
            <person name="Noone D."/>
            <person name="O'Reilly M."/>
            <person name="Ogawa K."/>
            <person name="Ogiwara A."/>
            <person name="Oudega B."/>
            <person name="Park S.-H."/>
            <person name="Parro V."/>
            <person name="Pohl T.M."/>
            <person name="Portetelle D."/>
            <person name="Porwollik S."/>
            <person name="Prescott A.M."/>
            <person name="Presecan E."/>
            <person name="Pujic P."/>
            <person name="Purnelle B."/>
            <person name="Rapoport G."/>
            <person name="Rey M."/>
            <person name="Reynolds S."/>
            <person name="Rieger M."/>
            <person name="Rivolta C."/>
            <person name="Rocha E."/>
            <person name="Roche B."/>
            <person name="Rose M."/>
            <person name="Sadaie Y."/>
            <person name="Sato T."/>
            <person name="Scanlan E."/>
            <person name="Schleich S."/>
            <person name="Schroeter R."/>
            <person name="Scoffone F."/>
            <person name="Sekiguchi J."/>
            <person name="Sekowska A."/>
            <person name="Seror S.J."/>
            <person name="Serror P."/>
            <person name="Shin B.-S."/>
            <person name="Soldo B."/>
            <person name="Sorokin A."/>
            <person name="Tacconi E."/>
            <person name="Takagi T."/>
            <person name="Takahashi H."/>
            <person name="Takemaru K."/>
            <person name="Takeuchi M."/>
            <person name="Tamakoshi A."/>
            <person name="Tanaka T."/>
            <person name="Terpstra P."/>
            <person name="Tognoni A."/>
            <person name="Tosato V."/>
            <person name="Uchiyama S."/>
            <person name="Vandenbol M."/>
            <person name="Vannier F."/>
            <person name="Vassarotti A."/>
            <person name="Viari A."/>
            <person name="Wambutt R."/>
            <person name="Wedler E."/>
            <person name="Wedler H."/>
            <person name="Weitzenegger T."/>
            <person name="Winters P."/>
            <person name="Wipat A."/>
            <person name="Yamamoto H."/>
            <person name="Yamane K."/>
            <person name="Yasumoto K."/>
            <person name="Yata K."/>
            <person name="Yoshida K."/>
            <person name="Yoshikawa H.-F."/>
            <person name="Zumstein E."/>
            <person name="Yoshikawa H."/>
            <person name="Danchin A."/>
        </authorList>
    </citation>
    <scope>NUCLEOTIDE SEQUENCE [LARGE SCALE GENOMIC DNA]</scope>
    <source>
        <strain>168</strain>
    </source>
</reference>
<evidence type="ECO:0000305" key="1"/>
<name>SSPB_BACSU</name>